<accession>Q4AAT7</accession>
<proteinExistence type="inferred from homology"/>
<sequence>MKKKISQAIIKFFKNENLIIDESKLIIEKSKNFGDYSSNVALIFAKQNKIDSLKLAQTIKNQLLSENLNLEKIEIAPPGFINFFISKNEYANIVSEIIQKGENFGRYSLQKKINLEFVSANPTGFLHLGHLRGAVIGDILANILEFSGNFVFREYYINDFGSQIDRLVGSVFSRYQQIFKKFALPEEAYLGEDIIWCAQKFFQIYANKFENSSLDDLETYKIFREKSIEIFLDEIKADLANLSIKFDVFSSESELFRTEKVQKNLANLPFVYKKEEAIWLKTSKFGDQKDRVLVKKNGEFTYFSSDIAYHFEKINSNFKPDFLINIWGADHIGYVDRMKAALKTVNLNQKLDILLYQLVKLFKNGQEFKMSKRMGKTFTIKDLLELVDQDAIRYFISERSYNSLVEFDIGLAAKISLQNPLFLIQYAHARASKLLANSTIVPEKILKFEAENETILISKLKQFEEIVLKITKNYKINLLNKYLLELANLFNSFYSNSKIIGNQNQNSLLSLTKAVQIVLKNGLKLLGIKAKERI</sequence>
<dbReference type="EC" id="6.1.1.19" evidence="1"/>
<dbReference type="EMBL" id="AE017243">
    <property type="protein sequence ID" value="AAZ44106.1"/>
    <property type="molecule type" value="Genomic_DNA"/>
</dbReference>
<dbReference type="RefSeq" id="WP_011283833.1">
    <property type="nucleotide sequence ID" value="NC_007295.1"/>
</dbReference>
<dbReference type="SMR" id="Q4AAT7"/>
<dbReference type="GeneID" id="41334299"/>
<dbReference type="KEGG" id="mhj:MHJ_0012"/>
<dbReference type="eggNOG" id="COG0018">
    <property type="taxonomic scope" value="Bacteria"/>
</dbReference>
<dbReference type="HOGENOM" id="CLU_006406_0_1_14"/>
<dbReference type="OrthoDB" id="9805987at2"/>
<dbReference type="Proteomes" id="UP000000548">
    <property type="component" value="Chromosome"/>
</dbReference>
<dbReference type="GO" id="GO:0005737">
    <property type="term" value="C:cytoplasm"/>
    <property type="evidence" value="ECO:0007669"/>
    <property type="project" value="UniProtKB-SubCell"/>
</dbReference>
<dbReference type="GO" id="GO:0004814">
    <property type="term" value="F:arginine-tRNA ligase activity"/>
    <property type="evidence" value="ECO:0007669"/>
    <property type="project" value="UniProtKB-UniRule"/>
</dbReference>
<dbReference type="GO" id="GO:0005524">
    <property type="term" value="F:ATP binding"/>
    <property type="evidence" value="ECO:0007669"/>
    <property type="project" value="UniProtKB-UniRule"/>
</dbReference>
<dbReference type="GO" id="GO:0006420">
    <property type="term" value="P:arginyl-tRNA aminoacylation"/>
    <property type="evidence" value="ECO:0007669"/>
    <property type="project" value="UniProtKB-UniRule"/>
</dbReference>
<dbReference type="CDD" id="cd00671">
    <property type="entry name" value="ArgRS_core"/>
    <property type="match status" value="1"/>
</dbReference>
<dbReference type="Gene3D" id="3.30.1360.70">
    <property type="entry name" value="Arginyl tRNA synthetase N-terminal domain"/>
    <property type="match status" value="1"/>
</dbReference>
<dbReference type="Gene3D" id="3.40.50.620">
    <property type="entry name" value="HUPs"/>
    <property type="match status" value="1"/>
</dbReference>
<dbReference type="Gene3D" id="1.10.730.10">
    <property type="entry name" value="Isoleucyl-tRNA Synthetase, Domain 1"/>
    <property type="match status" value="1"/>
</dbReference>
<dbReference type="HAMAP" id="MF_00123">
    <property type="entry name" value="Arg_tRNA_synth"/>
    <property type="match status" value="1"/>
</dbReference>
<dbReference type="InterPro" id="IPR001412">
    <property type="entry name" value="aa-tRNA-synth_I_CS"/>
</dbReference>
<dbReference type="InterPro" id="IPR001278">
    <property type="entry name" value="Arg-tRNA-ligase"/>
</dbReference>
<dbReference type="InterPro" id="IPR005148">
    <property type="entry name" value="Arg-tRNA-synth_N"/>
</dbReference>
<dbReference type="InterPro" id="IPR036695">
    <property type="entry name" value="Arg-tRNA-synth_N_sf"/>
</dbReference>
<dbReference type="InterPro" id="IPR035684">
    <property type="entry name" value="ArgRS_core"/>
</dbReference>
<dbReference type="InterPro" id="IPR008909">
    <property type="entry name" value="DALR_anticod-bd"/>
</dbReference>
<dbReference type="InterPro" id="IPR014729">
    <property type="entry name" value="Rossmann-like_a/b/a_fold"/>
</dbReference>
<dbReference type="InterPro" id="IPR009080">
    <property type="entry name" value="tRNAsynth_Ia_anticodon-bd"/>
</dbReference>
<dbReference type="NCBIfam" id="TIGR00456">
    <property type="entry name" value="argS"/>
    <property type="match status" value="1"/>
</dbReference>
<dbReference type="PANTHER" id="PTHR11956:SF5">
    <property type="entry name" value="ARGININE--TRNA LIGASE, CYTOPLASMIC"/>
    <property type="match status" value="1"/>
</dbReference>
<dbReference type="PANTHER" id="PTHR11956">
    <property type="entry name" value="ARGINYL-TRNA SYNTHETASE"/>
    <property type="match status" value="1"/>
</dbReference>
<dbReference type="Pfam" id="PF03485">
    <property type="entry name" value="Arg_tRNA_synt_N"/>
    <property type="match status" value="1"/>
</dbReference>
<dbReference type="Pfam" id="PF05746">
    <property type="entry name" value="DALR_1"/>
    <property type="match status" value="1"/>
</dbReference>
<dbReference type="Pfam" id="PF00750">
    <property type="entry name" value="tRNA-synt_1d"/>
    <property type="match status" value="1"/>
</dbReference>
<dbReference type="PRINTS" id="PR01038">
    <property type="entry name" value="TRNASYNTHARG"/>
</dbReference>
<dbReference type="SMART" id="SM01016">
    <property type="entry name" value="Arg_tRNA_synt_N"/>
    <property type="match status" value="1"/>
</dbReference>
<dbReference type="SMART" id="SM00836">
    <property type="entry name" value="DALR_1"/>
    <property type="match status" value="1"/>
</dbReference>
<dbReference type="SUPFAM" id="SSF47323">
    <property type="entry name" value="Anticodon-binding domain of a subclass of class I aminoacyl-tRNA synthetases"/>
    <property type="match status" value="1"/>
</dbReference>
<dbReference type="SUPFAM" id="SSF55190">
    <property type="entry name" value="Arginyl-tRNA synthetase (ArgRS), N-terminal 'additional' domain"/>
    <property type="match status" value="1"/>
</dbReference>
<dbReference type="SUPFAM" id="SSF52374">
    <property type="entry name" value="Nucleotidylyl transferase"/>
    <property type="match status" value="1"/>
</dbReference>
<dbReference type="PROSITE" id="PS00178">
    <property type="entry name" value="AA_TRNA_LIGASE_I"/>
    <property type="match status" value="1"/>
</dbReference>
<name>SYR_MESHJ</name>
<reference key="1">
    <citation type="journal article" date="2005" name="J. Bacteriol.">
        <title>Swine and poultry pathogens: the complete genome sequences of two strains of Mycoplasma hyopneumoniae and a strain of Mycoplasma synoviae.</title>
        <authorList>
            <person name="Vasconcelos A.T.R."/>
            <person name="Ferreira H.B."/>
            <person name="Bizarro C.V."/>
            <person name="Bonatto S.L."/>
            <person name="Carvalho M.O."/>
            <person name="Pinto P.M."/>
            <person name="Almeida D.F."/>
            <person name="Almeida L.G.P."/>
            <person name="Almeida R."/>
            <person name="Alves-Junior L."/>
            <person name="Assuncao E.N."/>
            <person name="Azevedo V.A.C."/>
            <person name="Bogo M.R."/>
            <person name="Brigido M.M."/>
            <person name="Brocchi M."/>
            <person name="Burity H.A."/>
            <person name="Camargo A.A."/>
            <person name="Camargo S.S."/>
            <person name="Carepo M.S."/>
            <person name="Carraro D.M."/>
            <person name="de Mattos Cascardo J.C."/>
            <person name="Castro L.A."/>
            <person name="Cavalcanti G."/>
            <person name="Chemale G."/>
            <person name="Collevatti R.G."/>
            <person name="Cunha C.W."/>
            <person name="Dallagiovanna B."/>
            <person name="Dambros B.P."/>
            <person name="Dellagostin O.A."/>
            <person name="Falcao C."/>
            <person name="Fantinatti-Garboggini F."/>
            <person name="Felipe M.S.S."/>
            <person name="Fiorentin L."/>
            <person name="Franco G.R."/>
            <person name="Freitas N.S.A."/>
            <person name="Frias D."/>
            <person name="Grangeiro T.B."/>
            <person name="Grisard E.C."/>
            <person name="Guimaraes C.T."/>
            <person name="Hungria M."/>
            <person name="Jardim S.N."/>
            <person name="Krieger M.A."/>
            <person name="Laurino J.P."/>
            <person name="Lima L.F.A."/>
            <person name="Lopes M.I."/>
            <person name="Loreto E.L.S."/>
            <person name="Madeira H.M.F."/>
            <person name="Manfio G.P."/>
            <person name="Maranhao A.Q."/>
            <person name="Martinkovics C.T."/>
            <person name="Medeiros S.R.B."/>
            <person name="Moreira M.A.M."/>
            <person name="Neiva M."/>
            <person name="Ramalho-Neto C.E."/>
            <person name="Nicolas M.F."/>
            <person name="Oliveira S.C."/>
            <person name="Paixao R.F.C."/>
            <person name="Pedrosa F.O."/>
            <person name="Pena S.D.J."/>
            <person name="Pereira M."/>
            <person name="Pereira-Ferrari L."/>
            <person name="Piffer I."/>
            <person name="Pinto L.S."/>
            <person name="Potrich D.P."/>
            <person name="Salim A.C.M."/>
            <person name="Santos F.R."/>
            <person name="Schmitt R."/>
            <person name="Schneider M.P.C."/>
            <person name="Schrank A."/>
            <person name="Schrank I.S."/>
            <person name="Schuck A.F."/>
            <person name="Seuanez H.N."/>
            <person name="Silva D.W."/>
            <person name="Silva R."/>
            <person name="Silva S.C."/>
            <person name="Soares C.M.A."/>
            <person name="Souza K.R.L."/>
            <person name="Souza R.C."/>
            <person name="Staats C.C."/>
            <person name="Steffens M.B.R."/>
            <person name="Teixeira S.M.R."/>
            <person name="Urmenyi T.P."/>
            <person name="Vainstein M.H."/>
            <person name="Zuccherato L.W."/>
            <person name="Simpson A.J.G."/>
            <person name="Zaha A."/>
        </authorList>
    </citation>
    <scope>NUCLEOTIDE SEQUENCE [LARGE SCALE GENOMIC DNA]</scope>
    <source>
        <strain>J / ATCC 25934 / NCTC 10110</strain>
    </source>
</reference>
<protein>
    <recommendedName>
        <fullName evidence="1">Arginine--tRNA ligase</fullName>
        <ecNumber evidence="1">6.1.1.19</ecNumber>
    </recommendedName>
    <alternativeName>
        <fullName evidence="1">Arginyl-tRNA synthetase</fullName>
        <shortName evidence="1">ArgRS</shortName>
    </alternativeName>
</protein>
<comment type="catalytic activity">
    <reaction evidence="1">
        <text>tRNA(Arg) + L-arginine + ATP = L-arginyl-tRNA(Arg) + AMP + diphosphate</text>
        <dbReference type="Rhea" id="RHEA:20301"/>
        <dbReference type="Rhea" id="RHEA-COMP:9658"/>
        <dbReference type="Rhea" id="RHEA-COMP:9673"/>
        <dbReference type="ChEBI" id="CHEBI:30616"/>
        <dbReference type="ChEBI" id="CHEBI:32682"/>
        <dbReference type="ChEBI" id="CHEBI:33019"/>
        <dbReference type="ChEBI" id="CHEBI:78442"/>
        <dbReference type="ChEBI" id="CHEBI:78513"/>
        <dbReference type="ChEBI" id="CHEBI:456215"/>
        <dbReference type="EC" id="6.1.1.19"/>
    </reaction>
</comment>
<comment type="subunit">
    <text evidence="1">Monomer.</text>
</comment>
<comment type="subcellular location">
    <subcellularLocation>
        <location evidence="1">Cytoplasm</location>
    </subcellularLocation>
</comment>
<comment type="similarity">
    <text evidence="1">Belongs to the class-I aminoacyl-tRNA synthetase family.</text>
</comment>
<gene>
    <name evidence="1" type="primary">argS</name>
    <name type="ordered locus">MHJ_0012</name>
</gene>
<organism>
    <name type="scientific">Mesomycoplasma hyopneumoniae (strain J / ATCC 25934 / NCTC 10110)</name>
    <name type="common">Mycoplasma hyopneumoniae</name>
    <dbReference type="NCBI Taxonomy" id="262719"/>
    <lineage>
        <taxon>Bacteria</taxon>
        <taxon>Bacillati</taxon>
        <taxon>Mycoplasmatota</taxon>
        <taxon>Mycoplasmoidales</taxon>
        <taxon>Metamycoplasmataceae</taxon>
        <taxon>Mesomycoplasma</taxon>
    </lineage>
</organism>
<evidence type="ECO:0000255" key="1">
    <source>
        <dbReference type="HAMAP-Rule" id="MF_00123"/>
    </source>
</evidence>
<feature type="chain" id="PRO_0000242049" description="Arginine--tRNA ligase">
    <location>
        <begin position="1"/>
        <end position="534"/>
    </location>
</feature>
<feature type="short sequence motif" description="'HIGH' region">
    <location>
        <begin position="120"/>
        <end position="130"/>
    </location>
</feature>
<keyword id="KW-0030">Aminoacyl-tRNA synthetase</keyword>
<keyword id="KW-0067">ATP-binding</keyword>
<keyword id="KW-0963">Cytoplasm</keyword>
<keyword id="KW-0436">Ligase</keyword>
<keyword id="KW-0547">Nucleotide-binding</keyword>
<keyword id="KW-0648">Protein biosynthesis</keyword>